<comment type="function">
    <text evidence="1">Required for maturation of urease via the functional incorporation of the urease nickel metallocenter.</text>
</comment>
<comment type="subunit">
    <text evidence="1">UreD, UreF and UreG form a complex that acts as a GTP-hydrolysis-dependent molecular chaperone, activating the urease apoprotein by helping to assemble the nickel containing metallocenter of UreC. The UreE protein probably delivers the nickel.</text>
</comment>
<comment type="subcellular location">
    <subcellularLocation>
        <location evidence="1">Cytoplasm</location>
    </subcellularLocation>
</comment>
<comment type="similarity">
    <text evidence="1">Belongs to the UreD family.</text>
</comment>
<comment type="sequence caution" evidence="2">
    <conflict type="erroneous initiation">
        <sequence resource="EMBL-CDS" id="ABD01858"/>
    </conflict>
</comment>
<dbReference type="EMBL" id="CP000240">
    <property type="protein sequence ID" value="ABD01858.1"/>
    <property type="status" value="ALT_INIT"/>
    <property type="molecule type" value="Genomic_DNA"/>
</dbReference>
<dbReference type="RefSeq" id="WP_041436300.1">
    <property type="nucleotide sequence ID" value="NC_007776.1"/>
</dbReference>
<dbReference type="SMR" id="Q2JN19"/>
<dbReference type="STRING" id="321332.CYB_0878"/>
<dbReference type="KEGG" id="cyb:CYB_0878"/>
<dbReference type="eggNOG" id="COG0829">
    <property type="taxonomic scope" value="Bacteria"/>
</dbReference>
<dbReference type="HOGENOM" id="CLU_1069312_0_0_3"/>
<dbReference type="OrthoDB" id="9807968at2"/>
<dbReference type="Proteomes" id="UP000001938">
    <property type="component" value="Chromosome"/>
</dbReference>
<dbReference type="GO" id="GO:0005737">
    <property type="term" value="C:cytoplasm"/>
    <property type="evidence" value="ECO:0007669"/>
    <property type="project" value="UniProtKB-SubCell"/>
</dbReference>
<dbReference type="GO" id="GO:0016151">
    <property type="term" value="F:nickel cation binding"/>
    <property type="evidence" value="ECO:0007669"/>
    <property type="project" value="UniProtKB-UniRule"/>
</dbReference>
<dbReference type="HAMAP" id="MF_01384">
    <property type="entry name" value="UreD"/>
    <property type="match status" value="1"/>
</dbReference>
<dbReference type="InterPro" id="IPR002669">
    <property type="entry name" value="UreD"/>
</dbReference>
<dbReference type="PANTHER" id="PTHR33643">
    <property type="entry name" value="UREASE ACCESSORY PROTEIN D"/>
    <property type="match status" value="1"/>
</dbReference>
<dbReference type="PANTHER" id="PTHR33643:SF1">
    <property type="entry name" value="UREASE ACCESSORY PROTEIN D"/>
    <property type="match status" value="1"/>
</dbReference>
<dbReference type="Pfam" id="PF01774">
    <property type="entry name" value="UreD"/>
    <property type="match status" value="1"/>
</dbReference>
<sequence>MNFGKAILKATRRGEHTRIWEYSQAPLQWLGSPGEPPVYYLRNPNGGLLGGDRHRIEIGLGPGSALEIRTQGAMRLHPGLIRQQVKVKLAPTSQLIWIPHPTIPGAGADFRQQVQIELDPTARLAYAEIWTAGRLAMDERWQFEHLANCLQVWVTAGIPSSPEGRKLWLQEHIDLHFPHRQVSAASVLGSHLCWGSLYLLGDWPEPTWLTVHISGTESPYWLVKSPDPICKGWILRQVGPQAEAIWRHFGQVALQLAQAKGGSPQGW</sequence>
<gene>
    <name evidence="1" type="primary">ureD</name>
    <name type="ordered locus">CYB_0878</name>
</gene>
<organism>
    <name type="scientific">Synechococcus sp. (strain JA-2-3B'a(2-13))</name>
    <name type="common">Cyanobacteria bacterium Yellowstone B-Prime</name>
    <dbReference type="NCBI Taxonomy" id="321332"/>
    <lineage>
        <taxon>Bacteria</taxon>
        <taxon>Bacillati</taxon>
        <taxon>Cyanobacteriota</taxon>
        <taxon>Cyanophyceae</taxon>
        <taxon>Synechococcales</taxon>
        <taxon>Synechococcaceae</taxon>
        <taxon>Synechococcus</taxon>
    </lineage>
</organism>
<keyword id="KW-0143">Chaperone</keyword>
<keyword id="KW-0963">Cytoplasm</keyword>
<keyword id="KW-0996">Nickel insertion</keyword>
<keyword id="KW-1185">Reference proteome</keyword>
<feature type="chain" id="PRO_0000340526" description="Urease accessory protein UreD">
    <location>
        <begin position="1"/>
        <end position="267"/>
    </location>
</feature>
<evidence type="ECO:0000255" key="1">
    <source>
        <dbReference type="HAMAP-Rule" id="MF_01384"/>
    </source>
</evidence>
<evidence type="ECO:0000305" key="2"/>
<name>URED_SYNJB</name>
<proteinExistence type="inferred from homology"/>
<reference key="1">
    <citation type="journal article" date="2007" name="ISME J.">
        <title>Population level functional diversity in a microbial community revealed by comparative genomic and metagenomic analyses.</title>
        <authorList>
            <person name="Bhaya D."/>
            <person name="Grossman A.R."/>
            <person name="Steunou A.-S."/>
            <person name="Khuri N."/>
            <person name="Cohan F.M."/>
            <person name="Hamamura N."/>
            <person name="Melendrez M.C."/>
            <person name="Bateson M.M."/>
            <person name="Ward D.M."/>
            <person name="Heidelberg J.F."/>
        </authorList>
    </citation>
    <scope>NUCLEOTIDE SEQUENCE [LARGE SCALE GENOMIC DNA]</scope>
    <source>
        <strain>JA-2-3B'a(2-13)</strain>
    </source>
</reference>
<protein>
    <recommendedName>
        <fullName evidence="1">Urease accessory protein UreD</fullName>
    </recommendedName>
</protein>
<accession>Q2JN19</accession>